<protein>
    <recommendedName>
        <fullName evidence="1">N-acetylmuramic acid 6-phosphate etherase</fullName>
        <shortName evidence="1">MurNAc-6-P etherase</shortName>
        <ecNumber evidence="1">4.2.1.126</ecNumber>
    </recommendedName>
    <alternativeName>
        <fullName evidence="1">N-acetylmuramic acid 6-phosphate hydrolase</fullName>
    </alternativeName>
    <alternativeName>
        <fullName evidence="1">N-acetylmuramic acid 6-phosphate lyase</fullName>
    </alternativeName>
</protein>
<organism>
    <name type="scientific">Deinococcus radiodurans (strain ATCC 13939 / DSM 20539 / JCM 16871 / CCUG 27074 / LMG 4051 / NBRC 15346 / NCIMB 9279 / VKM B-1422 / R1)</name>
    <dbReference type="NCBI Taxonomy" id="243230"/>
    <lineage>
        <taxon>Bacteria</taxon>
        <taxon>Thermotogati</taxon>
        <taxon>Deinococcota</taxon>
        <taxon>Deinococci</taxon>
        <taxon>Deinococcales</taxon>
        <taxon>Deinococcaceae</taxon>
        <taxon>Deinococcus</taxon>
    </lineage>
</organism>
<evidence type="ECO:0000255" key="1">
    <source>
        <dbReference type="HAMAP-Rule" id="MF_00068"/>
    </source>
</evidence>
<dbReference type="EC" id="4.2.1.126" evidence="1"/>
<dbReference type="EMBL" id="AE001825">
    <property type="protein sequence ID" value="AAF12418.1"/>
    <property type="molecule type" value="Genomic_DNA"/>
</dbReference>
<dbReference type="PIR" id="F75573">
    <property type="entry name" value="F75573"/>
</dbReference>
<dbReference type="RefSeq" id="NP_285536.1">
    <property type="nucleotide sequence ID" value="NC_001264.1"/>
</dbReference>
<dbReference type="RefSeq" id="WP_010889472.1">
    <property type="nucleotide sequence ID" value="NC_001264.1"/>
</dbReference>
<dbReference type="SMR" id="Q9RYU5"/>
<dbReference type="FunCoup" id="Q9RYU5">
    <property type="interactions" value="71"/>
</dbReference>
<dbReference type="STRING" id="243230.DR_A0213"/>
<dbReference type="PaxDb" id="243230-DR_A0213"/>
<dbReference type="EnsemblBacteria" id="AAF12418">
    <property type="protein sequence ID" value="AAF12418"/>
    <property type="gene ID" value="DR_A0213"/>
</dbReference>
<dbReference type="GeneID" id="69519107"/>
<dbReference type="KEGG" id="dra:DR_A0213"/>
<dbReference type="PATRIC" id="fig|243230.17.peg.3102"/>
<dbReference type="eggNOG" id="COG2103">
    <property type="taxonomic scope" value="Bacteria"/>
</dbReference>
<dbReference type="HOGENOM" id="CLU_049049_1_1_0"/>
<dbReference type="InParanoid" id="Q9RYU5"/>
<dbReference type="OrthoDB" id="9813395at2"/>
<dbReference type="UniPathway" id="UPA00342"/>
<dbReference type="Proteomes" id="UP000002524">
    <property type="component" value="Chromosome 2"/>
</dbReference>
<dbReference type="GO" id="GO:0097367">
    <property type="term" value="F:carbohydrate derivative binding"/>
    <property type="evidence" value="ECO:0007669"/>
    <property type="project" value="InterPro"/>
</dbReference>
<dbReference type="GO" id="GO:0016835">
    <property type="term" value="F:carbon-oxygen lyase activity"/>
    <property type="evidence" value="ECO:0000318"/>
    <property type="project" value="GO_Central"/>
</dbReference>
<dbReference type="GO" id="GO:0016803">
    <property type="term" value="F:ether hydrolase activity"/>
    <property type="evidence" value="ECO:0000318"/>
    <property type="project" value="GO_Central"/>
</dbReference>
<dbReference type="GO" id="GO:0046348">
    <property type="term" value="P:amino sugar catabolic process"/>
    <property type="evidence" value="ECO:0000318"/>
    <property type="project" value="GO_Central"/>
</dbReference>
<dbReference type="GO" id="GO:0097173">
    <property type="term" value="P:N-acetylmuramic acid catabolic process"/>
    <property type="evidence" value="ECO:0007669"/>
    <property type="project" value="UniProtKB-UniPathway"/>
</dbReference>
<dbReference type="GO" id="GO:0009254">
    <property type="term" value="P:peptidoglycan turnover"/>
    <property type="evidence" value="ECO:0000318"/>
    <property type="project" value="GO_Central"/>
</dbReference>
<dbReference type="CDD" id="cd05007">
    <property type="entry name" value="SIS_Etherase"/>
    <property type="match status" value="1"/>
</dbReference>
<dbReference type="FunFam" id="1.10.8.1080:FF:000001">
    <property type="entry name" value="N-acetylmuramic acid 6-phosphate etherase"/>
    <property type="match status" value="1"/>
</dbReference>
<dbReference type="Gene3D" id="1.10.8.1080">
    <property type="match status" value="1"/>
</dbReference>
<dbReference type="Gene3D" id="3.40.50.10490">
    <property type="entry name" value="Glucose-6-phosphate isomerase like protein, domain 1"/>
    <property type="match status" value="1"/>
</dbReference>
<dbReference type="HAMAP" id="MF_00068">
    <property type="entry name" value="MurQ"/>
    <property type="match status" value="1"/>
</dbReference>
<dbReference type="InterPro" id="IPR005488">
    <property type="entry name" value="Etherase_MurQ"/>
</dbReference>
<dbReference type="InterPro" id="IPR005486">
    <property type="entry name" value="Glucokinase_regulatory_CS"/>
</dbReference>
<dbReference type="InterPro" id="IPR040190">
    <property type="entry name" value="MURQ/GCKR"/>
</dbReference>
<dbReference type="InterPro" id="IPR001347">
    <property type="entry name" value="SIS_dom"/>
</dbReference>
<dbReference type="InterPro" id="IPR046348">
    <property type="entry name" value="SIS_dom_sf"/>
</dbReference>
<dbReference type="NCBIfam" id="TIGR00274">
    <property type="entry name" value="N-acetylmuramic acid 6-phosphate etherase"/>
    <property type="match status" value="1"/>
</dbReference>
<dbReference type="NCBIfam" id="NF003915">
    <property type="entry name" value="PRK05441.1"/>
    <property type="match status" value="1"/>
</dbReference>
<dbReference type="NCBIfam" id="NF009222">
    <property type="entry name" value="PRK12570.1"/>
    <property type="match status" value="1"/>
</dbReference>
<dbReference type="PANTHER" id="PTHR10088">
    <property type="entry name" value="GLUCOKINASE REGULATORY PROTEIN"/>
    <property type="match status" value="1"/>
</dbReference>
<dbReference type="PANTHER" id="PTHR10088:SF4">
    <property type="entry name" value="GLUCOKINASE REGULATORY PROTEIN"/>
    <property type="match status" value="1"/>
</dbReference>
<dbReference type="Pfam" id="PF22645">
    <property type="entry name" value="GKRP_SIS_N"/>
    <property type="match status" value="1"/>
</dbReference>
<dbReference type="SUPFAM" id="SSF53697">
    <property type="entry name" value="SIS domain"/>
    <property type="match status" value="1"/>
</dbReference>
<dbReference type="PROSITE" id="PS01272">
    <property type="entry name" value="GCKR"/>
    <property type="match status" value="1"/>
</dbReference>
<dbReference type="PROSITE" id="PS51464">
    <property type="entry name" value="SIS"/>
    <property type="match status" value="1"/>
</dbReference>
<accession>Q9RYU5</accession>
<gene>
    <name evidence="1" type="primary">murQ</name>
    <name type="ordered locus">DR_A0213</name>
</gene>
<name>MURQ_DEIRA</name>
<reference key="1">
    <citation type="journal article" date="1999" name="Science">
        <title>Genome sequence of the radioresistant bacterium Deinococcus radiodurans R1.</title>
        <authorList>
            <person name="White O."/>
            <person name="Eisen J.A."/>
            <person name="Heidelberg J.F."/>
            <person name="Hickey E.K."/>
            <person name="Peterson J.D."/>
            <person name="Dodson R.J."/>
            <person name="Haft D.H."/>
            <person name="Gwinn M.L."/>
            <person name="Nelson W.C."/>
            <person name="Richardson D.L."/>
            <person name="Moffat K.S."/>
            <person name="Qin H."/>
            <person name="Jiang L."/>
            <person name="Pamphile W."/>
            <person name="Crosby M."/>
            <person name="Shen M."/>
            <person name="Vamathevan J.J."/>
            <person name="Lam P."/>
            <person name="McDonald L.A."/>
            <person name="Utterback T.R."/>
            <person name="Zalewski C."/>
            <person name="Makarova K.S."/>
            <person name="Aravind L."/>
            <person name="Daly M.J."/>
            <person name="Minton K.W."/>
            <person name="Fleischmann R.D."/>
            <person name="Ketchum K.A."/>
            <person name="Nelson K.E."/>
            <person name="Salzberg S.L."/>
            <person name="Smith H.O."/>
            <person name="Venter J.C."/>
            <person name="Fraser C.M."/>
        </authorList>
    </citation>
    <scope>NUCLEOTIDE SEQUENCE [LARGE SCALE GENOMIC DNA]</scope>
    <source>
        <strain>ATCC 13939 / DSM 20539 / JCM 16871 / CCUG 27074 / LMG 4051 / NBRC 15346 / NCIMB 9279 / VKM B-1422 / R1</strain>
    </source>
</reference>
<keyword id="KW-0119">Carbohydrate metabolism</keyword>
<keyword id="KW-0456">Lyase</keyword>
<keyword id="KW-1185">Reference proteome</keyword>
<feature type="chain" id="PRO_0000249619" description="N-acetylmuramic acid 6-phosphate etherase">
    <location>
        <begin position="1"/>
        <end position="305"/>
    </location>
</feature>
<feature type="domain" description="SIS" evidence="1">
    <location>
        <begin position="54"/>
        <end position="217"/>
    </location>
</feature>
<feature type="active site" description="Proton donor" evidence="1">
    <location>
        <position position="82"/>
    </location>
</feature>
<feature type="active site" evidence="1">
    <location>
        <position position="113"/>
    </location>
</feature>
<proteinExistence type="inferred from homology"/>
<sequence>MTDPRRTEQVHPDYADLDTLAPDALIAALADDQLGAVRAVQAAAPQLTAALNAAVPQLERGGRLVYVGAGTSGRLGVLDATELTPTFSWPPERAVPLIAGGERAIRQAVEGAEDDEAAGERDVQAVNIGPDDVLIAVAASGTTPYVLGAARSGRAAGALTVGLANNPGAPLLAAVDCPVLLDTGPEIISGSTRLKAGTAQKIALNTLSSALMVRLGKLYGNLMVDVRATNAKLEDRARRLVQHATGADADAAQAALSECGGSVKTALVMLKLGLGAQEAAQRLEGAGGHARQVLGEGEALGTSAS</sequence>
<comment type="function">
    <text evidence="1">Specifically catalyzes the cleavage of the D-lactyl ether substituent of MurNAc 6-phosphate, producing GlcNAc 6-phosphate and D-lactate.</text>
</comment>
<comment type="catalytic activity">
    <reaction evidence="1">
        <text>N-acetyl-D-muramate 6-phosphate + H2O = N-acetyl-D-glucosamine 6-phosphate + (R)-lactate</text>
        <dbReference type="Rhea" id="RHEA:26410"/>
        <dbReference type="ChEBI" id="CHEBI:15377"/>
        <dbReference type="ChEBI" id="CHEBI:16004"/>
        <dbReference type="ChEBI" id="CHEBI:57513"/>
        <dbReference type="ChEBI" id="CHEBI:58722"/>
        <dbReference type="EC" id="4.2.1.126"/>
    </reaction>
</comment>
<comment type="pathway">
    <text evidence="1">Amino-sugar metabolism; N-acetylmuramate degradation.</text>
</comment>
<comment type="subunit">
    <text evidence="1">Homodimer.</text>
</comment>
<comment type="miscellaneous">
    <text evidence="1">A lyase-type mechanism (elimination/hydration) is suggested for the cleavage of the lactyl ether bond of MurNAc 6-phosphate, with the formation of an alpha,beta-unsaturated aldehyde intermediate with (E)-stereochemistry, followed by the syn addition of water to give product.</text>
</comment>
<comment type="similarity">
    <text evidence="1">Belongs to the GCKR-like family. MurNAc-6-P etherase subfamily.</text>
</comment>